<organism>
    <name type="scientific">Mus musculus</name>
    <name type="common">Mouse</name>
    <dbReference type="NCBI Taxonomy" id="10090"/>
    <lineage>
        <taxon>Eukaryota</taxon>
        <taxon>Metazoa</taxon>
        <taxon>Chordata</taxon>
        <taxon>Craniata</taxon>
        <taxon>Vertebrata</taxon>
        <taxon>Euteleostomi</taxon>
        <taxon>Mammalia</taxon>
        <taxon>Eutheria</taxon>
        <taxon>Euarchontoglires</taxon>
        <taxon>Glires</taxon>
        <taxon>Rodentia</taxon>
        <taxon>Myomorpha</taxon>
        <taxon>Muroidea</taxon>
        <taxon>Muridae</taxon>
        <taxon>Murinae</taxon>
        <taxon>Mus</taxon>
        <taxon>Mus</taxon>
    </lineage>
</organism>
<comment type="function">
    <text evidence="1">Molecular adapter which is involved in cilium biogenesis. Part of a functional complex including OFD1 a centriolar protein involved in cilium assembly. Could regulate the cAMP-dependent phosphorylation of OFD1, and its subsequent ubiquitination by PJA2 which ultimately leads to its proteasomal degradation.</text>
</comment>
<comment type="subunit">
    <text evidence="1">Interacts with PJA2; the interaction is direct and recruits PJA2 to centrosomes. Interacts with OFD1; regulates its activity in cilium assembly. Interacts with PRKACA.</text>
</comment>
<comment type="subcellular location">
    <subcellularLocation>
        <location evidence="1">Cytoplasm</location>
        <location evidence="1">Cytoskeleton</location>
        <location evidence="1">Microtubule organizing center</location>
        <location evidence="1">Centrosome</location>
    </subcellularLocation>
    <subcellularLocation>
        <location evidence="1">Cytoplasm</location>
        <location evidence="1">Cytoskeleton</location>
        <location evidence="1">Microtubule organizing center</location>
        <location evidence="1">Centrosome</location>
        <location evidence="1">Centriolar satellite</location>
    </subcellularLocation>
    <subcellularLocation>
        <location evidence="1">Cytoplasm</location>
        <location evidence="1">Cytoskeleton</location>
        <location evidence="1">Cilium basal body</location>
    </subcellularLocation>
</comment>
<comment type="alternative products">
    <event type="alternative splicing"/>
    <isoform>
        <id>Q6NXY1-1</id>
        <name>1</name>
        <sequence type="displayed"/>
    </isoform>
    <isoform>
        <id>Q6NXY1-4</id>
        <name>2</name>
        <sequence type="described" ref="VSP_016185 VSP_016186 VSP_016187"/>
    </isoform>
</comment>
<comment type="sequence caution" evidence="5">
    <conflict type="miscellaneous discrepancy">
        <sequence resource="EMBL-CDS" id="BAD83881"/>
    </conflict>
    <text>Intron retention.</text>
</comment>
<comment type="sequence caution" evidence="5">
    <conflict type="miscellaneous discrepancy">
        <sequence resource="EMBL-CDS" id="BAE32475"/>
    </conflict>
    <text>Probable cloning artifact.</text>
</comment>
<comment type="sequence caution" evidence="5">
    <conflict type="miscellaneous discrepancy">
        <sequence resource="EMBL-CDS" id="BAE42193"/>
    </conflict>
    <text>Probable cloning artifact.</text>
</comment>
<protein>
    <recommendedName>
        <fullName evidence="5">TBC1 domain family member 31</fullName>
    </recommendedName>
    <alternativeName>
        <fullName evidence="6">Protein 4-B-3</fullName>
    </alternativeName>
    <alternativeName>
        <fullName evidence="7">WD repeat-containing protein 67</fullName>
    </alternativeName>
</protein>
<dbReference type="EMBL" id="AK084542">
    <property type="protein sequence ID" value="BAC39214.1"/>
    <property type="molecule type" value="mRNA"/>
</dbReference>
<dbReference type="EMBL" id="AK154264">
    <property type="protein sequence ID" value="BAE32475.1"/>
    <property type="status" value="ALT_SEQ"/>
    <property type="molecule type" value="mRNA"/>
</dbReference>
<dbReference type="EMBL" id="AK171024">
    <property type="protein sequence ID" value="BAE42193.1"/>
    <property type="status" value="ALT_SEQ"/>
    <property type="molecule type" value="mRNA"/>
</dbReference>
<dbReference type="EMBL" id="BC050039">
    <property type="protein sequence ID" value="AAH50039.1"/>
    <property type="molecule type" value="mRNA"/>
</dbReference>
<dbReference type="EMBL" id="BC066830">
    <property type="protein sequence ID" value="AAH66830.1"/>
    <property type="molecule type" value="mRNA"/>
</dbReference>
<dbReference type="EMBL" id="AB185844">
    <property type="protein sequence ID" value="BAD83881.1"/>
    <property type="status" value="ALT_SEQ"/>
    <property type="molecule type" value="mRNA"/>
</dbReference>
<dbReference type="CCDS" id="CCDS37077.2">
    <molecule id="Q6NXY1-1"/>
</dbReference>
<dbReference type="RefSeq" id="NP_001074865.2">
    <molecule id="Q6NXY1-1"/>
    <property type="nucleotide sequence ID" value="NM_001081396.2"/>
</dbReference>
<dbReference type="RefSeq" id="NP_001161151.1">
    <property type="nucleotide sequence ID" value="NM_001167679.1"/>
</dbReference>
<dbReference type="SMR" id="Q6NXY1"/>
<dbReference type="BioGRID" id="229163">
    <property type="interactions" value="2"/>
</dbReference>
<dbReference type="FunCoup" id="Q6NXY1">
    <property type="interactions" value="1687"/>
</dbReference>
<dbReference type="IntAct" id="Q6NXY1">
    <property type="interactions" value="1"/>
</dbReference>
<dbReference type="STRING" id="10090.ENSMUSP00000022992"/>
<dbReference type="iPTMnet" id="Q6NXY1"/>
<dbReference type="PhosphoSitePlus" id="Q6NXY1"/>
<dbReference type="jPOST" id="Q6NXY1"/>
<dbReference type="PaxDb" id="10090-ENSMUSP00000022992"/>
<dbReference type="ProteomicsDB" id="254653">
    <molecule id="Q6NXY1-1"/>
</dbReference>
<dbReference type="ProteomicsDB" id="254654">
    <molecule id="Q6NXY1-4"/>
</dbReference>
<dbReference type="Antibodypedia" id="13779">
    <property type="antibodies" value="37 antibodies from 10 providers"/>
</dbReference>
<dbReference type="Ensembl" id="ENSMUST00000022992.13">
    <molecule id="Q6NXY1-1"/>
    <property type="protein sequence ID" value="ENSMUSP00000022992.7"/>
    <property type="gene ID" value="ENSMUSG00000022364.15"/>
</dbReference>
<dbReference type="GeneID" id="210544"/>
<dbReference type="KEGG" id="mmu:210544"/>
<dbReference type="UCSC" id="uc007vss.1">
    <molecule id="Q6NXY1-1"/>
    <property type="organism name" value="mouse"/>
</dbReference>
<dbReference type="UCSC" id="uc007vsy.1">
    <molecule id="Q6NXY1-4"/>
    <property type="organism name" value="mouse"/>
</dbReference>
<dbReference type="AGR" id="MGI:2684931"/>
<dbReference type="CTD" id="93594"/>
<dbReference type="MGI" id="MGI:2684931">
    <property type="gene designation" value="Tbc1d31"/>
</dbReference>
<dbReference type="VEuPathDB" id="HostDB:ENSMUSG00000022364"/>
<dbReference type="eggNOG" id="KOG0295">
    <property type="taxonomic scope" value="Eukaryota"/>
</dbReference>
<dbReference type="eggNOG" id="KOG1093">
    <property type="taxonomic scope" value="Eukaryota"/>
</dbReference>
<dbReference type="GeneTree" id="ENSGT00940000153859"/>
<dbReference type="HOGENOM" id="CLU_003330_0_0_1"/>
<dbReference type="InParanoid" id="Q6NXY1"/>
<dbReference type="OMA" id="GCYPEKY"/>
<dbReference type="OrthoDB" id="5578278at2759"/>
<dbReference type="PhylomeDB" id="Q6NXY1"/>
<dbReference type="TreeFam" id="TF324799"/>
<dbReference type="BioGRID-ORCS" id="210544">
    <property type="hits" value="7 hits in 79 CRISPR screens"/>
</dbReference>
<dbReference type="PRO" id="PR:Q6NXY1"/>
<dbReference type="Proteomes" id="UP000000589">
    <property type="component" value="Chromosome 15"/>
</dbReference>
<dbReference type="RNAct" id="Q6NXY1">
    <property type="molecule type" value="protein"/>
</dbReference>
<dbReference type="Bgee" id="ENSMUSG00000022364">
    <property type="expression patterns" value="Expressed in spermatid and 188 other cell types or tissues"/>
</dbReference>
<dbReference type="ExpressionAtlas" id="Q6NXY1">
    <property type="expression patterns" value="baseline and differential"/>
</dbReference>
<dbReference type="GO" id="GO:0034451">
    <property type="term" value="C:centriolar satellite"/>
    <property type="evidence" value="ECO:0000250"/>
    <property type="project" value="UniProtKB"/>
</dbReference>
<dbReference type="GO" id="GO:0005813">
    <property type="term" value="C:centrosome"/>
    <property type="evidence" value="ECO:0000250"/>
    <property type="project" value="UniProtKB"/>
</dbReference>
<dbReference type="GO" id="GO:0036064">
    <property type="term" value="C:ciliary basal body"/>
    <property type="evidence" value="ECO:0000250"/>
    <property type="project" value="UniProtKB"/>
</dbReference>
<dbReference type="GO" id="GO:0005794">
    <property type="term" value="C:Golgi apparatus"/>
    <property type="evidence" value="ECO:0007669"/>
    <property type="project" value="Ensembl"/>
</dbReference>
<dbReference type="GO" id="GO:0060090">
    <property type="term" value="F:molecular adaptor activity"/>
    <property type="evidence" value="ECO:0000250"/>
    <property type="project" value="UniProtKB"/>
</dbReference>
<dbReference type="GO" id="GO:0060271">
    <property type="term" value="P:cilium assembly"/>
    <property type="evidence" value="ECO:0000250"/>
    <property type="project" value="UniProtKB"/>
</dbReference>
<dbReference type="FunFam" id="2.130.10.10:FF:000226">
    <property type="entry name" value="TBC1 domain family member 31"/>
    <property type="match status" value="1"/>
</dbReference>
<dbReference type="FunFam" id="2.130.10.10:FF:000185">
    <property type="entry name" value="TBC1 domain family member 31 isoform X1"/>
    <property type="match status" value="1"/>
</dbReference>
<dbReference type="FunFam" id="1.10.472.80:FF:000022">
    <property type="entry name" value="TBC1 domain family, member 31"/>
    <property type="match status" value="1"/>
</dbReference>
<dbReference type="Gene3D" id="1.10.472.80">
    <property type="entry name" value="Ypt/Rab-GAP domain of gyp1p, domain 3"/>
    <property type="match status" value="1"/>
</dbReference>
<dbReference type="Gene3D" id="2.130.10.10">
    <property type="entry name" value="YVTN repeat-like/Quinoprotein amine dehydrogenase"/>
    <property type="match status" value="2"/>
</dbReference>
<dbReference type="InterPro" id="IPR000195">
    <property type="entry name" value="Rab-GAP-TBC_dom"/>
</dbReference>
<dbReference type="InterPro" id="IPR035969">
    <property type="entry name" value="Rab-GAP_TBC_sf"/>
</dbReference>
<dbReference type="InterPro" id="IPR051570">
    <property type="entry name" value="TBC1_cilium_biogenesis"/>
</dbReference>
<dbReference type="InterPro" id="IPR015943">
    <property type="entry name" value="WD40/YVTN_repeat-like_dom_sf"/>
</dbReference>
<dbReference type="InterPro" id="IPR036322">
    <property type="entry name" value="WD40_repeat_dom_sf"/>
</dbReference>
<dbReference type="InterPro" id="IPR001680">
    <property type="entry name" value="WD40_rpt"/>
</dbReference>
<dbReference type="PANTHER" id="PTHR19853:SF1">
    <property type="entry name" value="TBC1 DOMAIN FAMILY MEMBER 31"/>
    <property type="match status" value="1"/>
</dbReference>
<dbReference type="PANTHER" id="PTHR19853">
    <property type="entry name" value="WD REPEAT CONTAINING PROTEIN 3 WDR3"/>
    <property type="match status" value="1"/>
</dbReference>
<dbReference type="Pfam" id="PF00566">
    <property type="entry name" value="RabGAP-TBC"/>
    <property type="match status" value="1"/>
</dbReference>
<dbReference type="Pfam" id="PF00400">
    <property type="entry name" value="WD40"/>
    <property type="match status" value="1"/>
</dbReference>
<dbReference type="SMART" id="SM00320">
    <property type="entry name" value="WD40"/>
    <property type="match status" value="6"/>
</dbReference>
<dbReference type="SUPFAM" id="SSF50978">
    <property type="entry name" value="WD40 repeat-like"/>
    <property type="match status" value="1"/>
</dbReference>
<dbReference type="SUPFAM" id="SSF47923">
    <property type="entry name" value="Ypt/Rab-GAP domain of gyp1p"/>
    <property type="match status" value="1"/>
</dbReference>
<dbReference type="PROSITE" id="PS50086">
    <property type="entry name" value="TBC_RABGAP"/>
    <property type="match status" value="1"/>
</dbReference>
<dbReference type="PROSITE" id="PS00678">
    <property type="entry name" value="WD_REPEATS_1"/>
    <property type="match status" value="1"/>
</dbReference>
<dbReference type="PROSITE" id="PS50294">
    <property type="entry name" value="WD_REPEATS_REGION"/>
    <property type="match status" value="1"/>
</dbReference>
<proteinExistence type="evidence at protein level"/>
<name>TBC31_MOUSE</name>
<feature type="chain" id="PRO_0000051421" description="TBC1 domain family member 31">
    <location>
        <begin position="1"/>
        <end position="996"/>
    </location>
</feature>
<feature type="repeat" description="WD 1">
    <location>
        <begin position="33"/>
        <end position="74"/>
    </location>
</feature>
<feature type="repeat" description="WD 2">
    <location>
        <begin position="75"/>
        <end position="116"/>
    </location>
</feature>
<feature type="repeat" description="WD 3">
    <location>
        <begin position="117"/>
        <end position="157"/>
    </location>
</feature>
<feature type="repeat" description="WD 4">
    <location>
        <begin position="158"/>
        <end position="200"/>
    </location>
</feature>
<feature type="repeat" description="WD 5">
    <location>
        <begin position="201"/>
        <end position="248"/>
    </location>
</feature>
<feature type="repeat" description="WD 6">
    <location>
        <begin position="249"/>
        <end position="296"/>
    </location>
</feature>
<feature type="repeat" description="WD 7">
    <location>
        <begin position="297"/>
        <end position="334"/>
    </location>
</feature>
<feature type="domain" description="Rab-GAP TBC" evidence="3">
    <location>
        <begin position="424"/>
        <end position="599"/>
    </location>
</feature>
<feature type="region of interest" description="Mediates direct interaction with PJA2" evidence="1">
    <location>
        <begin position="983"/>
        <end position="986"/>
    </location>
</feature>
<feature type="coiled-coil region" evidence="2">
    <location>
        <begin position="388"/>
        <end position="414"/>
    </location>
</feature>
<feature type="coiled-coil region" evidence="2">
    <location>
        <begin position="699"/>
        <end position="844"/>
    </location>
</feature>
<feature type="splice variant" id="VSP_016185" description="In isoform 2." evidence="4">
    <location>
        <begin position="1"/>
        <end position="121"/>
    </location>
</feature>
<feature type="splice variant" id="VSP_016186" description="In isoform 2." evidence="4">
    <original>LAAVKRELE</original>
    <variation>CGPHDPAKT</variation>
    <location>
        <begin position="758"/>
        <end position="766"/>
    </location>
</feature>
<feature type="splice variant" id="VSP_016187" description="In isoform 2." evidence="4">
    <location>
        <begin position="767"/>
        <end position="996"/>
    </location>
</feature>
<feature type="sequence conflict" description="In Ref. 2; AAH50039." evidence="5" ref="2">
    <original>D</original>
    <variation>N</variation>
    <location>
        <position position="55"/>
    </location>
</feature>
<feature type="sequence conflict" description="In Ref. 2; AAH50039." evidence="5" ref="2">
    <original>C</original>
    <variation>R</variation>
    <location>
        <position position="197"/>
    </location>
</feature>
<feature type="sequence conflict" description="In Ref. 1; BAE32475." evidence="5" ref="1">
    <original>E</original>
    <variation>G</variation>
    <location>
        <position position="400"/>
    </location>
</feature>
<feature type="sequence conflict" description="In Ref. 2; AAH50039." evidence="5" ref="2">
    <original>R</original>
    <variation>G</variation>
    <location>
        <position position="806"/>
    </location>
</feature>
<keyword id="KW-0025">Alternative splicing</keyword>
<keyword id="KW-0966">Cell projection</keyword>
<keyword id="KW-0970">Cilium biogenesis/degradation</keyword>
<keyword id="KW-0175">Coiled coil</keyword>
<keyword id="KW-0963">Cytoplasm</keyword>
<keyword id="KW-0206">Cytoskeleton</keyword>
<keyword id="KW-1185">Reference proteome</keyword>
<keyword id="KW-0677">Repeat</keyword>
<keyword id="KW-0853">WD repeat</keyword>
<gene>
    <name evidence="7" type="primary">Tbc1d31</name>
    <name evidence="7" type="synonym">Wdr67</name>
</gene>
<evidence type="ECO:0000250" key="1">
    <source>
        <dbReference type="UniProtKB" id="Q96DN5"/>
    </source>
</evidence>
<evidence type="ECO:0000255" key="2"/>
<evidence type="ECO:0000255" key="3">
    <source>
        <dbReference type="PROSITE-ProRule" id="PRU00163"/>
    </source>
</evidence>
<evidence type="ECO:0000303" key="4">
    <source>
    </source>
</evidence>
<evidence type="ECO:0000305" key="5"/>
<evidence type="ECO:0000312" key="6">
    <source>
        <dbReference type="EMBL" id="BAD83881.1"/>
    </source>
</evidence>
<evidence type="ECO:0000312" key="7">
    <source>
        <dbReference type="MGI" id="MGI:2684931"/>
    </source>
</evidence>
<accession>Q6NXY1</accession>
<accession>Q3TBW4</accession>
<accession>Q3U4F6</accession>
<accession>Q5KSA3</accession>
<accession>Q810J7</accession>
<accession>Q8C3Y2</accession>
<reference key="1">
    <citation type="journal article" date="2005" name="Science">
        <title>The transcriptional landscape of the mammalian genome.</title>
        <authorList>
            <person name="Carninci P."/>
            <person name="Kasukawa T."/>
            <person name="Katayama S."/>
            <person name="Gough J."/>
            <person name="Frith M.C."/>
            <person name="Maeda N."/>
            <person name="Oyama R."/>
            <person name="Ravasi T."/>
            <person name="Lenhard B."/>
            <person name="Wells C."/>
            <person name="Kodzius R."/>
            <person name="Shimokawa K."/>
            <person name="Bajic V.B."/>
            <person name="Brenner S.E."/>
            <person name="Batalov S."/>
            <person name="Forrest A.R."/>
            <person name="Zavolan M."/>
            <person name="Davis M.J."/>
            <person name="Wilming L.G."/>
            <person name="Aidinis V."/>
            <person name="Allen J.E."/>
            <person name="Ambesi-Impiombato A."/>
            <person name="Apweiler R."/>
            <person name="Aturaliya R.N."/>
            <person name="Bailey T.L."/>
            <person name="Bansal M."/>
            <person name="Baxter L."/>
            <person name="Beisel K.W."/>
            <person name="Bersano T."/>
            <person name="Bono H."/>
            <person name="Chalk A.M."/>
            <person name="Chiu K.P."/>
            <person name="Choudhary V."/>
            <person name="Christoffels A."/>
            <person name="Clutterbuck D.R."/>
            <person name="Crowe M.L."/>
            <person name="Dalla E."/>
            <person name="Dalrymple B.P."/>
            <person name="de Bono B."/>
            <person name="Della Gatta G."/>
            <person name="di Bernardo D."/>
            <person name="Down T."/>
            <person name="Engstrom P."/>
            <person name="Fagiolini M."/>
            <person name="Faulkner G."/>
            <person name="Fletcher C.F."/>
            <person name="Fukushima T."/>
            <person name="Furuno M."/>
            <person name="Futaki S."/>
            <person name="Gariboldi M."/>
            <person name="Georgii-Hemming P."/>
            <person name="Gingeras T.R."/>
            <person name="Gojobori T."/>
            <person name="Green R.E."/>
            <person name="Gustincich S."/>
            <person name="Harbers M."/>
            <person name="Hayashi Y."/>
            <person name="Hensch T.K."/>
            <person name="Hirokawa N."/>
            <person name="Hill D."/>
            <person name="Huminiecki L."/>
            <person name="Iacono M."/>
            <person name="Ikeo K."/>
            <person name="Iwama A."/>
            <person name="Ishikawa T."/>
            <person name="Jakt M."/>
            <person name="Kanapin A."/>
            <person name="Katoh M."/>
            <person name="Kawasawa Y."/>
            <person name="Kelso J."/>
            <person name="Kitamura H."/>
            <person name="Kitano H."/>
            <person name="Kollias G."/>
            <person name="Krishnan S.P."/>
            <person name="Kruger A."/>
            <person name="Kummerfeld S.K."/>
            <person name="Kurochkin I.V."/>
            <person name="Lareau L.F."/>
            <person name="Lazarevic D."/>
            <person name="Lipovich L."/>
            <person name="Liu J."/>
            <person name="Liuni S."/>
            <person name="McWilliam S."/>
            <person name="Madan Babu M."/>
            <person name="Madera M."/>
            <person name="Marchionni L."/>
            <person name="Matsuda H."/>
            <person name="Matsuzawa S."/>
            <person name="Miki H."/>
            <person name="Mignone F."/>
            <person name="Miyake S."/>
            <person name="Morris K."/>
            <person name="Mottagui-Tabar S."/>
            <person name="Mulder N."/>
            <person name="Nakano N."/>
            <person name="Nakauchi H."/>
            <person name="Ng P."/>
            <person name="Nilsson R."/>
            <person name="Nishiguchi S."/>
            <person name="Nishikawa S."/>
            <person name="Nori F."/>
            <person name="Ohara O."/>
            <person name="Okazaki Y."/>
            <person name="Orlando V."/>
            <person name="Pang K.C."/>
            <person name="Pavan W.J."/>
            <person name="Pavesi G."/>
            <person name="Pesole G."/>
            <person name="Petrovsky N."/>
            <person name="Piazza S."/>
            <person name="Reed J."/>
            <person name="Reid J.F."/>
            <person name="Ring B.Z."/>
            <person name="Ringwald M."/>
            <person name="Rost B."/>
            <person name="Ruan Y."/>
            <person name="Salzberg S.L."/>
            <person name="Sandelin A."/>
            <person name="Schneider C."/>
            <person name="Schoenbach C."/>
            <person name="Sekiguchi K."/>
            <person name="Semple C.A."/>
            <person name="Seno S."/>
            <person name="Sessa L."/>
            <person name="Sheng Y."/>
            <person name="Shibata Y."/>
            <person name="Shimada H."/>
            <person name="Shimada K."/>
            <person name="Silva D."/>
            <person name="Sinclair B."/>
            <person name="Sperling S."/>
            <person name="Stupka E."/>
            <person name="Sugiura K."/>
            <person name="Sultana R."/>
            <person name="Takenaka Y."/>
            <person name="Taki K."/>
            <person name="Tammoja K."/>
            <person name="Tan S.L."/>
            <person name="Tang S."/>
            <person name="Taylor M.S."/>
            <person name="Tegner J."/>
            <person name="Teichmann S.A."/>
            <person name="Ueda H.R."/>
            <person name="van Nimwegen E."/>
            <person name="Verardo R."/>
            <person name="Wei C.L."/>
            <person name="Yagi K."/>
            <person name="Yamanishi H."/>
            <person name="Zabarovsky E."/>
            <person name="Zhu S."/>
            <person name="Zimmer A."/>
            <person name="Hide W."/>
            <person name="Bult C."/>
            <person name="Grimmond S.M."/>
            <person name="Teasdale R.D."/>
            <person name="Liu E.T."/>
            <person name="Brusic V."/>
            <person name="Quackenbush J."/>
            <person name="Wahlestedt C."/>
            <person name="Mattick J.S."/>
            <person name="Hume D.A."/>
            <person name="Kai C."/>
            <person name="Sasaki D."/>
            <person name="Tomaru Y."/>
            <person name="Fukuda S."/>
            <person name="Kanamori-Katayama M."/>
            <person name="Suzuki M."/>
            <person name="Aoki J."/>
            <person name="Arakawa T."/>
            <person name="Iida J."/>
            <person name="Imamura K."/>
            <person name="Itoh M."/>
            <person name="Kato T."/>
            <person name="Kawaji H."/>
            <person name="Kawagashira N."/>
            <person name="Kawashima T."/>
            <person name="Kojima M."/>
            <person name="Kondo S."/>
            <person name="Konno H."/>
            <person name="Nakano K."/>
            <person name="Ninomiya N."/>
            <person name="Nishio T."/>
            <person name="Okada M."/>
            <person name="Plessy C."/>
            <person name="Shibata K."/>
            <person name="Shiraki T."/>
            <person name="Suzuki S."/>
            <person name="Tagami M."/>
            <person name="Waki K."/>
            <person name="Watahiki A."/>
            <person name="Okamura-Oho Y."/>
            <person name="Suzuki H."/>
            <person name="Kawai J."/>
            <person name="Hayashizaki Y."/>
        </authorList>
    </citation>
    <scope>NUCLEOTIDE SEQUENCE [LARGE SCALE MRNA] (ISOFORM 2)</scope>
    <scope>NUCLEOTIDE SEQUENCE [LARGE SCALE MRNA] OF 1-833 (ISOFORM 1)</scope>
    <source>
        <strain>C57BL/6J</strain>
        <strain>NOD</strain>
        <tissue>Dendritic cell</tissue>
        <tissue>Embryonic heart</tissue>
    </source>
</reference>
<reference key="2">
    <citation type="journal article" date="2004" name="Genome Res.">
        <title>The status, quality, and expansion of the NIH full-length cDNA project: the Mammalian Gene Collection (MGC).</title>
        <authorList>
            <consortium name="The MGC Project Team"/>
        </authorList>
    </citation>
    <scope>NUCLEOTIDE SEQUENCE [LARGE SCALE MRNA] (ISOFORM 1)</scope>
    <source>
        <strain>C57BL/6J</strain>
        <tissue>Embryo</tissue>
        <tissue>Embryonic germ cell</tissue>
    </source>
</reference>
<reference key="3">
    <citation type="submission" date="2004-07" db="EMBL/GenBank/DDBJ databases">
        <title>Mus musculus hypothetical protein 4-B-3.</title>
        <authorList>
            <person name="Ishii T."/>
            <person name="Tomooka Y."/>
        </authorList>
    </citation>
    <scope>NUCLEOTIDE SEQUENCE [MRNA] OF 1-833 (ISOFORM 1)</scope>
    <source>
        <tissue>Neuron</tissue>
    </source>
</reference>
<reference key="4">
    <citation type="journal article" date="2010" name="Cell">
        <title>A tissue-specific atlas of mouse protein phosphorylation and expression.</title>
        <authorList>
            <person name="Huttlin E.L."/>
            <person name="Jedrychowski M.P."/>
            <person name="Elias J.E."/>
            <person name="Goswami T."/>
            <person name="Rad R."/>
            <person name="Beausoleil S.A."/>
            <person name="Villen J."/>
            <person name="Haas W."/>
            <person name="Sowa M.E."/>
            <person name="Gygi S.P."/>
        </authorList>
    </citation>
    <scope>IDENTIFICATION BY MASS SPECTROMETRY [LARGE SCALE ANALYSIS]</scope>
    <source>
        <tissue>Testis</tissue>
    </source>
</reference>
<sequence length="996" mass="115838">MQSTDLGNKESGKIWHRKPSPATHDGIIVNIVHSTSEYHPKVLRFLNVAFDGSGDSFIAGDHQGNIYVFDLHGNRFNLVQRTAQACTALAFNLRRKSEFLVALADYSIKCFDTVTKELVSWMRGHESSVCSISVHASGRYAITTSSDTAQLWDLDTFQRKRKLNIRQSVGIQKVFFLPLSNTILSCFKDNSIFAWECDTLFCKYQLPGPPEGSNILYKVFAVTRDGRILAAGGKSNHLHLWCLEATGLFRIIQMPAKVRAVRHLEFLPDSFDAGSNQVLGVLSQDGIMRFVNIQTCKLLFEIGTVEEGISSSVISPHGRYIASIMENGSLNVYSVQALTQEINKPPPPLVKVIEDLPSNTVSSSNLKMKIMPGRVQRPARCKESKIPTRVLKQDLTGDLENKENELSEGLNKKRLQILLKGYGEYPTKYRMFIWRSLLQLPENHTAFSSLVDKGTHAAYLSLQKKYPIKSRKLLRVLQRTLSALAHWSAIFSDTPYLPLLAFPFVKLFQNNQLICFEVVATLIINWCQHWFEYFPNPPINILSMIENVLAFHDKELLQHFIDRDITSQVYAWPLLETLFSEVLTREEWLRLFDNIFSNHPSFLLMTVVAYSTCSRAPLLNCTLKNDFEYFFHHRNNLDINVVIREVYHLMETTPADIHPNSMLDAFVALTKGQYPIFNQYPKFIVDYQTREWERIRNDELDFLRERQTVENMQAEVDEQRAKDEAWYQKQELLRRAEETRREILLQEEEKMAQQRQRLAAVKRELEIKEIHLQDAARRRLLKLQQDQREMELRRLEDEIERKVQMRDQEIAATAKDLEIRQLELEAQKRLYEKDLTTSQEAVAKEIREDTDAHRRKAALEEHMFQKLLENSQMGGRRAQRWKEAEEKEFHLQSAKKASALSDASRKWFLRQETSAALEHEEMPWLQRQYMDSAYLPQTSRLHDVSDMDPSTHIFSRNYPTEWNHMEHDLLKNVRDLRRRLTARARNSCRHPHLLVT</sequence>